<proteinExistence type="evidence at transcript level"/>
<reference key="1">
    <citation type="submission" date="1994-08" db="EMBL/GenBank/DDBJ databases">
        <authorList>
            <person name="Lin Y.-P."/>
            <person name="Limesand S.W."/>
            <person name="Price D.A."/>
            <person name="Wallace R.A."/>
        </authorList>
    </citation>
    <scope>NUCLEOTIDE SEQUENCE [MRNA]</scope>
    <source>
        <tissue>Pituitary</tissue>
    </source>
</reference>
<protein>
    <recommendedName>
        <fullName>Glycoprotein hormones alpha chain</fullName>
    </recommendedName>
    <alternativeName>
        <fullName>GTH-alpha</fullName>
    </alternativeName>
    <alternativeName>
        <fullName>Gonadotropin alpha chain</fullName>
    </alternativeName>
</protein>
<sequence length="125" mass="13804">MVSAVTTMGCMKAAGVSLLLLYFLLNAADSHPNFDSSSMACGECSLGLNRLFSRDRPLYQCMGCCFSRAYPTPQTAIQTMAIPKNITSEAKCCVAKHSYETKVDDITVRNHTECHCSTCYYHKLI</sequence>
<accession>P47744</accession>
<name>GLHA_FUNHE</name>
<evidence type="ECO:0000250" key="1">
    <source>
        <dbReference type="UniProtKB" id="P01215"/>
    </source>
</evidence>
<evidence type="ECO:0000250" key="2">
    <source>
        <dbReference type="UniProtKB" id="P37204"/>
    </source>
</evidence>
<evidence type="ECO:0000255" key="3"/>
<evidence type="ECO:0000305" key="4"/>
<organism>
    <name type="scientific">Fundulus heteroclitus</name>
    <name type="common">Killifish</name>
    <name type="synonym">Mummichog</name>
    <dbReference type="NCBI Taxonomy" id="8078"/>
    <lineage>
        <taxon>Eukaryota</taxon>
        <taxon>Metazoa</taxon>
        <taxon>Chordata</taxon>
        <taxon>Craniata</taxon>
        <taxon>Vertebrata</taxon>
        <taxon>Euteleostomi</taxon>
        <taxon>Actinopterygii</taxon>
        <taxon>Neopterygii</taxon>
        <taxon>Teleostei</taxon>
        <taxon>Neoteleostei</taxon>
        <taxon>Acanthomorphata</taxon>
        <taxon>Ovalentaria</taxon>
        <taxon>Atherinomorphae</taxon>
        <taxon>Cyprinodontiformes</taxon>
        <taxon>Fundulidae</taxon>
        <taxon>Fundulus</taxon>
    </lineage>
</organism>
<keyword id="KW-1015">Disulfide bond</keyword>
<keyword id="KW-0325">Glycoprotein</keyword>
<keyword id="KW-0372">Hormone</keyword>
<keyword id="KW-0964">Secreted</keyword>
<keyword id="KW-0732">Signal</keyword>
<gene>
    <name type="primary">cga</name>
    <name type="synonym">gth</name>
</gene>
<dbReference type="EMBL" id="U12923">
    <property type="protein sequence ID" value="AAB60605.1"/>
    <property type="molecule type" value="mRNA"/>
</dbReference>
<dbReference type="RefSeq" id="XP_012723236.1">
    <property type="nucleotide sequence ID" value="XM_012867782.3"/>
</dbReference>
<dbReference type="SMR" id="P47744"/>
<dbReference type="STRING" id="8078.ENSFHEP00000011550"/>
<dbReference type="GlyCosmos" id="P47744">
    <property type="glycosylation" value="2 sites, No reported glycans"/>
</dbReference>
<dbReference type="Ensembl" id="ENSFHET00000018557.1">
    <property type="protein sequence ID" value="ENSFHEP00000011542.1"/>
    <property type="gene ID" value="ENSFHEG00000013002.1"/>
</dbReference>
<dbReference type="Ensembl" id="ENSFHET00000031636.1">
    <property type="protein sequence ID" value="ENSFHEP00000011550.1"/>
    <property type="gene ID" value="ENSFHEG00000013002.1"/>
</dbReference>
<dbReference type="GeneID" id="105929862"/>
<dbReference type="CTD" id="1081"/>
<dbReference type="GeneTree" id="ENSGT00390000012242"/>
<dbReference type="OrthoDB" id="9852859at2759"/>
<dbReference type="Proteomes" id="UP000265000">
    <property type="component" value="Unplaced"/>
</dbReference>
<dbReference type="GO" id="GO:0005615">
    <property type="term" value="C:extracellular space"/>
    <property type="evidence" value="ECO:0000250"/>
    <property type="project" value="UniProtKB"/>
</dbReference>
<dbReference type="GO" id="GO:0016914">
    <property type="term" value="C:follicle-stimulating hormone complex"/>
    <property type="evidence" value="ECO:0000250"/>
    <property type="project" value="UniProtKB"/>
</dbReference>
<dbReference type="GO" id="GO:0016913">
    <property type="term" value="F:follicle-stimulating hormone activity"/>
    <property type="evidence" value="ECO:0000250"/>
    <property type="project" value="UniProtKB"/>
</dbReference>
<dbReference type="GO" id="GO:0007186">
    <property type="term" value="P:G protein-coupled receptor signaling pathway"/>
    <property type="evidence" value="ECO:0000250"/>
    <property type="project" value="UniProtKB"/>
</dbReference>
<dbReference type="GO" id="GO:0010893">
    <property type="term" value="P:positive regulation of steroid biosynthetic process"/>
    <property type="evidence" value="ECO:0000250"/>
    <property type="project" value="UniProtKB"/>
</dbReference>
<dbReference type="GO" id="GO:0010469">
    <property type="term" value="P:regulation of signaling receptor activity"/>
    <property type="evidence" value="ECO:0000250"/>
    <property type="project" value="UniProtKB"/>
</dbReference>
<dbReference type="GO" id="GO:0006590">
    <property type="term" value="P:thyroid hormone generation"/>
    <property type="evidence" value="ECO:0007669"/>
    <property type="project" value="TreeGrafter"/>
</dbReference>
<dbReference type="FunFam" id="2.10.90.10:FF:000011">
    <property type="entry name" value="Glycoprotein hormones alpha chain"/>
    <property type="match status" value="1"/>
</dbReference>
<dbReference type="Gene3D" id="2.10.90.10">
    <property type="entry name" value="Cystine-knot cytokines"/>
    <property type="match status" value="1"/>
</dbReference>
<dbReference type="InterPro" id="IPR029034">
    <property type="entry name" value="Cystine-knot_cytokine"/>
</dbReference>
<dbReference type="InterPro" id="IPR000476">
    <property type="entry name" value="Glyco_hormone"/>
</dbReference>
<dbReference type="PANTHER" id="PTHR11509">
    <property type="entry name" value="GLYCOPROTEIN HORMONE ALPHA CHAIN"/>
    <property type="match status" value="1"/>
</dbReference>
<dbReference type="PANTHER" id="PTHR11509:SF0">
    <property type="entry name" value="GLYCOPROTEIN HORMONES ALPHA CHAIN"/>
    <property type="match status" value="1"/>
</dbReference>
<dbReference type="Pfam" id="PF00236">
    <property type="entry name" value="Hormone_6"/>
    <property type="match status" value="1"/>
</dbReference>
<dbReference type="PRINTS" id="PR00274">
    <property type="entry name" value="GLYCOHORMONE"/>
</dbReference>
<dbReference type="SMART" id="SM00067">
    <property type="entry name" value="GHA"/>
    <property type="match status" value="1"/>
</dbReference>
<dbReference type="SUPFAM" id="SSF57501">
    <property type="entry name" value="Cystine-knot cytokines"/>
    <property type="match status" value="1"/>
</dbReference>
<dbReference type="PROSITE" id="PS00779">
    <property type="entry name" value="GLYCO_HORMONE_ALPHA_1"/>
    <property type="match status" value="1"/>
</dbReference>
<dbReference type="PROSITE" id="PS00780">
    <property type="entry name" value="GLYCO_HORMONE_ALPHA_2"/>
    <property type="match status" value="1"/>
</dbReference>
<dbReference type="PROSITE" id="PS50277">
    <property type="entry name" value="GLYCO_HORMONE_ALPHA_3"/>
    <property type="match status" value="1"/>
</dbReference>
<comment type="function">
    <text evidence="2">Shared alpha chain of heterodimeric glycoprotein hormones. These hormones bind specific receptors on target cells that in turn activate downstream signaling pathways. Involved in gametogenesis and steroidogenesis.</text>
</comment>
<comment type="subunit">
    <text evidence="2">Heterodimer. Glycoprotein hormones are heterodimers composed of a common alpha chain described here and a unique beta chain which confers their biological specificity to the different hormones.</text>
</comment>
<comment type="subcellular location">
    <subcellularLocation>
        <location evidence="2">Secreted</location>
    </subcellularLocation>
</comment>
<comment type="similarity">
    <text evidence="4">Belongs to the glycoprotein hormones subunit alpha family.</text>
</comment>
<feature type="signal peptide" evidence="3">
    <location>
        <begin position="1"/>
        <end position="30"/>
    </location>
</feature>
<feature type="chain" id="PRO_0000011663" description="Glycoprotein hormones alpha chain">
    <location>
        <begin position="31"/>
        <end position="125"/>
    </location>
</feature>
<feature type="glycosylation site" description="N-linked (GlcNAc...) asparagine" evidence="1">
    <location>
        <position position="85"/>
    </location>
</feature>
<feature type="glycosylation site" description="N-linked (GlcNAc...) asparagine" evidence="1">
    <location>
        <position position="110"/>
    </location>
</feature>
<feature type="disulfide bond" evidence="1">
    <location>
        <begin position="41"/>
        <end position="64"/>
    </location>
</feature>
<feature type="disulfide bond" evidence="1">
    <location>
        <begin position="44"/>
        <end position="93"/>
    </location>
</feature>
<feature type="disulfide bond" evidence="1">
    <location>
        <begin position="61"/>
        <end position="114"/>
    </location>
</feature>
<feature type="disulfide bond" evidence="1">
    <location>
        <begin position="65"/>
        <end position="116"/>
    </location>
</feature>
<feature type="disulfide bond" evidence="1">
    <location>
        <begin position="92"/>
        <end position="119"/>
    </location>
</feature>
<feature type="sequence variant">
    <original>T</original>
    <variation>M</variation>
    <location>
        <position position="72"/>
    </location>
</feature>
<feature type="sequence variant">
    <original>A</original>
    <variation>P</variation>
    <location>
        <position position="95"/>
    </location>
</feature>